<feature type="chain" id="PRO_0000056270" description="E3 ubiquitin-protein ligase TRIM47">
    <location>
        <begin position="1"/>
        <end position="638"/>
    </location>
</feature>
<feature type="domain" description="B30.2/SPRY" evidence="5">
    <location>
        <begin position="410"/>
        <end position="631"/>
    </location>
</feature>
<feature type="zinc finger region" description="RING-type" evidence="4">
    <location>
        <begin position="9"/>
        <end position="58"/>
    </location>
</feature>
<feature type="zinc finger region" description="B box-type" evidence="3">
    <location>
        <begin position="177"/>
        <end position="217"/>
    </location>
</feature>
<feature type="region of interest" description="Disordered" evidence="6">
    <location>
        <begin position="79"/>
        <end position="119"/>
    </location>
</feature>
<feature type="region of interest" description="Disordered" evidence="6">
    <location>
        <begin position="300"/>
        <end position="322"/>
    </location>
</feature>
<feature type="region of interest" description="Disordered" evidence="6">
    <location>
        <begin position="384"/>
        <end position="411"/>
    </location>
</feature>
<feature type="coiled-coil region" evidence="2">
    <location>
        <begin position="296"/>
        <end position="324"/>
    </location>
</feature>
<feature type="compositionally biased region" description="Pro residues" evidence="6">
    <location>
        <begin position="88"/>
        <end position="100"/>
    </location>
</feature>
<feature type="compositionally biased region" description="Pro residues" evidence="6">
    <location>
        <begin position="108"/>
        <end position="119"/>
    </location>
</feature>
<feature type="compositionally biased region" description="Basic and acidic residues" evidence="6">
    <location>
        <begin position="302"/>
        <end position="312"/>
    </location>
</feature>
<feature type="binding site" evidence="3">
    <location>
        <position position="182"/>
    </location>
    <ligand>
        <name>Zn(2+)</name>
        <dbReference type="ChEBI" id="CHEBI:29105"/>
    </ligand>
</feature>
<feature type="binding site" evidence="3">
    <location>
        <position position="185"/>
    </location>
    <ligand>
        <name>Zn(2+)</name>
        <dbReference type="ChEBI" id="CHEBI:29105"/>
    </ligand>
</feature>
<feature type="binding site" evidence="3">
    <location>
        <position position="204"/>
    </location>
    <ligand>
        <name>Zn(2+)</name>
        <dbReference type="ChEBI" id="CHEBI:29105"/>
    </ligand>
</feature>
<feature type="binding site" evidence="3">
    <location>
        <position position="209"/>
    </location>
    <ligand>
        <name>Zn(2+)</name>
        <dbReference type="ChEBI" id="CHEBI:29105"/>
    </ligand>
</feature>
<feature type="modified residue" description="Phosphothreonine" evidence="1">
    <location>
        <position position="72"/>
    </location>
</feature>
<feature type="modified residue" description="Phosphoserine" evidence="12">
    <location>
        <position position="461"/>
    </location>
</feature>
<feature type="modified residue" description="Omega-N-methylarginine" evidence="16">
    <location>
        <position position="582"/>
    </location>
</feature>
<feature type="modified residue" description="Phosphoserine" evidence="13 15 17">
    <location>
        <position position="588"/>
    </location>
</feature>
<feature type="splice variant" id="VSP_055440" description="In isoform 2." evidence="9">
    <location>
        <begin position="1"/>
        <end position="238"/>
    </location>
</feature>
<feature type="sequence variant" id="VAR_057223" description="In dbSNP:rs1047043.">
    <original>E</original>
    <variation>A</variation>
    <location>
        <position position="500"/>
    </location>
</feature>
<feature type="modified residue" description="N-acetylmethionine" evidence="14">
    <location sequence="Q96LD4-2">
        <position position="1"/>
    </location>
</feature>
<evidence type="ECO:0000250" key="1">
    <source>
        <dbReference type="UniProtKB" id="Q8C0E3"/>
    </source>
</evidence>
<evidence type="ECO:0000255" key="2"/>
<evidence type="ECO:0000255" key="3">
    <source>
        <dbReference type="PROSITE-ProRule" id="PRU00024"/>
    </source>
</evidence>
<evidence type="ECO:0000255" key="4">
    <source>
        <dbReference type="PROSITE-ProRule" id="PRU00175"/>
    </source>
</evidence>
<evidence type="ECO:0000255" key="5">
    <source>
        <dbReference type="PROSITE-ProRule" id="PRU00548"/>
    </source>
</evidence>
<evidence type="ECO:0000256" key="6">
    <source>
        <dbReference type="SAM" id="MobiDB-lite"/>
    </source>
</evidence>
<evidence type="ECO:0000269" key="7">
    <source>
    </source>
</evidence>
<evidence type="ECO:0000269" key="8">
    <source>
    </source>
</evidence>
<evidence type="ECO:0000303" key="9">
    <source>
    </source>
</evidence>
<evidence type="ECO:0000305" key="10"/>
<evidence type="ECO:0000312" key="11">
    <source>
        <dbReference type="HGNC" id="HGNC:19020"/>
    </source>
</evidence>
<evidence type="ECO:0007744" key="12">
    <source>
    </source>
</evidence>
<evidence type="ECO:0007744" key="13">
    <source>
    </source>
</evidence>
<evidence type="ECO:0007744" key="14">
    <source>
    </source>
</evidence>
<evidence type="ECO:0007744" key="15">
    <source>
    </source>
</evidence>
<evidence type="ECO:0007744" key="16">
    <source>
    </source>
</evidence>
<evidence type="ECO:0007744" key="17">
    <source>
    </source>
</evidence>
<dbReference type="EC" id="2.3.2.27" evidence="8"/>
<dbReference type="EMBL" id="AY026763">
    <property type="protein sequence ID" value="AAK07687.1"/>
    <property type="molecule type" value="mRNA"/>
</dbReference>
<dbReference type="EMBL" id="AC087289">
    <property type="status" value="NOT_ANNOTATED_CDS"/>
    <property type="molecule type" value="Genomic_DNA"/>
</dbReference>
<dbReference type="EMBL" id="CH471099">
    <property type="protein sequence ID" value="EAW89332.1"/>
    <property type="molecule type" value="Genomic_DNA"/>
</dbReference>
<dbReference type="EMBL" id="BC006153">
    <property type="protein sequence ID" value="AAH06153.1"/>
    <property type="molecule type" value="mRNA"/>
</dbReference>
<dbReference type="EMBL" id="BC009225">
    <property type="protein sequence ID" value="AAH09225.2"/>
    <property type="molecule type" value="mRNA"/>
</dbReference>
<dbReference type="EMBL" id="BC017299">
    <property type="protein sequence ID" value="AAH17299.1"/>
    <property type="molecule type" value="mRNA"/>
</dbReference>
<dbReference type="CCDS" id="CCDS32737.1">
    <molecule id="Q96LD4-1"/>
</dbReference>
<dbReference type="PIR" id="JC7753">
    <property type="entry name" value="JC7753"/>
</dbReference>
<dbReference type="RefSeq" id="NP_258411.2">
    <molecule id="Q96LD4-1"/>
    <property type="nucleotide sequence ID" value="NM_033452.3"/>
</dbReference>
<dbReference type="RefSeq" id="XP_005257844.1">
    <molecule id="Q96LD4-2"/>
    <property type="nucleotide sequence ID" value="XM_005257787.5"/>
</dbReference>
<dbReference type="RefSeq" id="XP_005257845.1">
    <molecule id="Q96LD4-2"/>
    <property type="nucleotide sequence ID" value="XM_005257788.6"/>
</dbReference>
<dbReference type="RefSeq" id="XP_054173709.1">
    <molecule id="Q96LD4-2"/>
    <property type="nucleotide sequence ID" value="XM_054317734.1"/>
</dbReference>
<dbReference type="RefSeq" id="XP_054173710.1">
    <molecule id="Q96LD4-2"/>
    <property type="nucleotide sequence ID" value="XM_054317735.1"/>
</dbReference>
<dbReference type="SMR" id="Q96LD4"/>
<dbReference type="BioGRID" id="124794">
    <property type="interactions" value="65"/>
</dbReference>
<dbReference type="FunCoup" id="Q96LD4">
    <property type="interactions" value="476"/>
</dbReference>
<dbReference type="IntAct" id="Q96LD4">
    <property type="interactions" value="22"/>
</dbReference>
<dbReference type="MINT" id="Q96LD4"/>
<dbReference type="STRING" id="9606.ENSP00000254816"/>
<dbReference type="GlyGen" id="Q96LD4">
    <property type="glycosylation" value="1 site"/>
</dbReference>
<dbReference type="iPTMnet" id="Q96LD4"/>
<dbReference type="PhosphoSitePlus" id="Q96LD4"/>
<dbReference type="BioMuta" id="TRIM47"/>
<dbReference type="DMDM" id="313104035"/>
<dbReference type="jPOST" id="Q96LD4"/>
<dbReference type="MassIVE" id="Q96LD4"/>
<dbReference type="PaxDb" id="9606-ENSP00000254816"/>
<dbReference type="PeptideAtlas" id="Q96LD4"/>
<dbReference type="ProteomicsDB" id="77206">
    <molecule id="Q96LD4-1"/>
</dbReference>
<dbReference type="Pumba" id="Q96LD4"/>
<dbReference type="Antibodypedia" id="32298">
    <property type="antibodies" value="108 antibodies from 22 providers"/>
</dbReference>
<dbReference type="DNASU" id="91107"/>
<dbReference type="Ensembl" id="ENST00000254816.6">
    <molecule id="Q96LD4-1"/>
    <property type="protein sequence ID" value="ENSP00000254816.1"/>
    <property type="gene ID" value="ENSG00000132481.7"/>
</dbReference>
<dbReference type="GeneID" id="91107"/>
<dbReference type="KEGG" id="hsa:91107"/>
<dbReference type="MANE-Select" id="ENST00000254816.6">
    <property type="protein sequence ID" value="ENSP00000254816.1"/>
    <property type="RefSeq nucleotide sequence ID" value="NM_033452.3"/>
    <property type="RefSeq protein sequence ID" value="NP_258411.2"/>
</dbReference>
<dbReference type="UCSC" id="uc002jpv.4">
    <molecule id="Q96LD4-1"/>
    <property type="organism name" value="human"/>
</dbReference>
<dbReference type="AGR" id="HGNC:19020"/>
<dbReference type="CTD" id="91107"/>
<dbReference type="DisGeNET" id="91107"/>
<dbReference type="GeneCards" id="TRIM47"/>
<dbReference type="HGNC" id="HGNC:19020">
    <property type="gene designation" value="TRIM47"/>
</dbReference>
<dbReference type="HPA" id="ENSG00000132481">
    <property type="expression patterns" value="Low tissue specificity"/>
</dbReference>
<dbReference type="MIM" id="611041">
    <property type="type" value="gene"/>
</dbReference>
<dbReference type="neXtProt" id="NX_Q96LD4"/>
<dbReference type="OpenTargets" id="ENSG00000132481"/>
<dbReference type="PharmGKB" id="PA134883590"/>
<dbReference type="VEuPathDB" id="HostDB:ENSG00000132481"/>
<dbReference type="eggNOG" id="KOG2177">
    <property type="taxonomic scope" value="Eukaryota"/>
</dbReference>
<dbReference type="GeneTree" id="ENSGT00940000154334"/>
<dbReference type="HOGENOM" id="CLU_013137_0_2_1"/>
<dbReference type="InParanoid" id="Q96LD4"/>
<dbReference type="OMA" id="GWVSMGV"/>
<dbReference type="OrthoDB" id="6270329at2759"/>
<dbReference type="PAN-GO" id="Q96LD4">
    <property type="GO annotations" value="0 GO annotations based on evolutionary models"/>
</dbReference>
<dbReference type="PhylomeDB" id="Q96LD4"/>
<dbReference type="TreeFam" id="TF351086"/>
<dbReference type="PathwayCommons" id="Q96LD4"/>
<dbReference type="SignaLink" id="Q96LD4"/>
<dbReference type="SIGNOR" id="Q96LD4"/>
<dbReference type="UniPathway" id="UPA00143"/>
<dbReference type="BioGRID-ORCS" id="91107">
    <property type="hits" value="22 hits in 1201 CRISPR screens"/>
</dbReference>
<dbReference type="ChiTaRS" id="TRIM47">
    <property type="organism name" value="human"/>
</dbReference>
<dbReference type="GenomeRNAi" id="91107"/>
<dbReference type="Pharos" id="Q96LD4">
    <property type="development level" value="Tbio"/>
</dbReference>
<dbReference type="PRO" id="PR:Q96LD4"/>
<dbReference type="Proteomes" id="UP000005640">
    <property type="component" value="Chromosome 17"/>
</dbReference>
<dbReference type="RNAct" id="Q96LD4">
    <property type="molecule type" value="protein"/>
</dbReference>
<dbReference type="Bgee" id="ENSG00000132481">
    <property type="expression patterns" value="Expressed in apex of heart and 151 other cell types or tissues"/>
</dbReference>
<dbReference type="ExpressionAtlas" id="Q96LD4">
    <property type="expression patterns" value="baseline and differential"/>
</dbReference>
<dbReference type="GO" id="GO:0005829">
    <property type="term" value="C:cytosol"/>
    <property type="evidence" value="ECO:0000314"/>
    <property type="project" value="HPA"/>
</dbReference>
<dbReference type="GO" id="GO:0098978">
    <property type="term" value="C:glutamatergic synapse"/>
    <property type="evidence" value="ECO:0007669"/>
    <property type="project" value="Ensembl"/>
</dbReference>
<dbReference type="GO" id="GO:0005634">
    <property type="term" value="C:nucleus"/>
    <property type="evidence" value="ECO:0007669"/>
    <property type="project" value="UniProtKB-SubCell"/>
</dbReference>
<dbReference type="GO" id="GO:0098794">
    <property type="term" value="C:postsynapse"/>
    <property type="evidence" value="ECO:0007669"/>
    <property type="project" value="Ensembl"/>
</dbReference>
<dbReference type="GO" id="GO:0061630">
    <property type="term" value="F:ubiquitin protein ligase activity"/>
    <property type="evidence" value="ECO:0000314"/>
    <property type="project" value="UniProt"/>
</dbReference>
<dbReference type="GO" id="GO:0004842">
    <property type="term" value="F:ubiquitin-protein transferase activity"/>
    <property type="evidence" value="ECO:0000314"/>
    <property type="project" value="UniProtKB"/>
</dbReference>
<dbReference type="GO" id="GO:0008270">
    <property type="term" value="F:zinc ion binding"/>
    <property type="evidence" value="ECO:0007669"/>
    <property type="project" value="UniProtKB-KW"/>
</dbReference>
<dbReference type="GO" id="GO:0016567">
    <property type="term" value="P:protein ubiquitination"/>
    <property type="evidence" value="ECO:0000314"/>
    <property type="project" value="UniProtKB"/>
</dbReference>
<dbReference type="GO" id="GO:0150052">
    <property type="term" value="P:regulation of postsynapse assembly"/>
    <property type="evidence" value="ECO:0007669"/>
    <property type="project" value="Ensembl"/>
</dbReference>
<dbReference type="CDD" id="cd19842">
    <property type="entry name" value="Bbox1_TRIM25-like_C-IV"/>
    <property type="match status" value="1"/>
</dbReference>
<dbReference type="CDD" id="cd19769">
    <property type="entry name" value="Bbox2_TRIM16-like"/>
    <property type="match status" value="1"/>
</dbReference>
<dbReference type="CDD" id="cd15808">
    <property type="entry name" value="SPRY_PRY_TRIM47"/>
    <property type="match status" value="1"/>
</dbReference>
<dbReference type="FunFam" id="2.60.120.920:FF:000045">
    <property type="entry name" value="E3 ubiquitin/ISG15 ligase TRIM25"/>
    <property type="match status" value="1"/>
</dbReference>
<dbReference type="FunFam" id="3.30.160.60:FF:001413">
    <property type="entry name" value="tripartite motif-containing protein 47 isoform X1"/>
    <property type="match status" value="1"/>
</dbReference>
<dbReference type="FunFam" id="3.30.40.10:FF:000375">
    <property type="entry name" value="tripartite motif-containing protein 47 isoform X1"/>
    <property type="match status" value="1"/>
</dbReference>
<dbReference type="Gene3D" id="2.60.120.920">
    <property type="match status" value="1"/>
</dbReference>
<dbReference type="Gene3D" id="4.10.830.40">
    <property type="match status" value="1"/>
</dbReference>
<dbReference type="Gene3D" id="3.30.160.60">
    <property type="entry name" value="Classic Zinc Finger"/>
    <property type="match status" value="1"/>
</dbReference>
<dbReference type="Gene3D" id="3.30.40.10">
    <property type="entry name" value="Zinc/RING finger domain, C3HC4 (zinc finger)"/>
    <property type="match status" value="1"/>
</dbReference>
<dbReference type="InterPro" id="IPR001870">
    <property type="entry name" value="B30.2/SPRY"/>
</dbReference>
<dbReference type="InterPro" id="IPR043136">
    <property type="entry name" value="B30.2/SPRY_sf"/>
</dbReference>
<dbReference type="InterPro" id="IPR013320">
    <property type="entry name" value="ConA-like_dom_sf"/>
</dbReference>
<dbReference type="InterPro" id="IPR051051">
    <property type="entry name" value="E3_ubiq-ligase_TRIM/RNF"/>
</dbReference>
<dbReference type="InterPro" id="IPR042780">
    <property type="entry name" value="TRIM47_SPRY_PRY"/>
</dbReference>
<dbReference type="InterPro" id="IPR027370">
    <property type="entry name" value="Znf-RING_euk"/>
</dbReference>
<dbReference type="InterPro" id="IPR000315">
    <property type="entry name" value="Znf_B-box"/>
</dbReference>
<dbReference type="InterPro" id="IPR001841">
    <property type="entry name" value="Znf_RING"/>
</dbReference>
<dbReference type="InterPro" id="IPR013083">
    <property type="entry name" value="Znf_RING/FYVE/PHD"/>
</dbReference>
<dbReference type="InterPro" id="IPR017907">
    <property type="entry name" value="Znf_RING_CS"/>
</dbReference>
<dbReference type="PANTHER" id="PTHR25465">
    <property type="entry name" value="B-BOX DOMAIN CONTAINING"/>
    <property type="match status" value="1"/>
</dbReference>
<dbReference type="PANTHER" id="PTHR25465:SF21">
    <property type="entry name" value="E3 UBIQUITIN-PROTEIN LIGASE TRIM47"/>
    <property type="match status" value="1"/>
</dbReference>
<dbReference type="Pfam" id="PF00643">
    <property type="entry name" value="zf-B_box"/>
    <property type="match status" value="1"/>
</dbReference>
<dbReference type="Pfam" id="PF13445">
    <property type="entry name" value="zf-RING_UBOX"/>
    <property type="match status" value="1"/>
</dbReference>
<dbReference type="SMART" id="SM00336">
    <property type="entry name" value="BBOX"/>
    <property type="match status" value="1"/>
</dbReference>
<dbReference type="SMART" id="SM00184">
    <property type="entry name" value="RING"/>
    <property type="match status" value="1"/>
</dbReference>
<dbReference type="SUPFAM" id="SSF57845">
    <property type="entry name" value="B-box zinc-binding domain"/>
    <property type="match status" value="1"/>
</dbReference>
<dbReference type="SUPFAM" id="SSF49899">
    <property type="entry name" value="Concanavalin A-like lectins/glucanases"/>
    <property type="match status" value="1"/>
</dbReference>
<dbReference type="SUPFAM" id="SSF57850">
    <property type="entry name" value="RING/U-box"/>
    <property type="match status" value="1"/>
</dbReference>
<dbReference type="PROSITE" id="PS50188">
    <property type="entry name" value="B302_SPRY"/>
    <property type="match status" value="1"/>
</dbReference>
<dbReference type="PROSITE" id="PS50119">
    <property type="entry name" value="ZF_BBOX"/>
    <property type="match status" value="1"/>
</dbReference>
<dbReference type="PROSITE" id="PS00518">
    <property type="entry name" value="ZF_RING_1"/>
    <property type="match status" value="1"/>
</dbReference>
<dbReference type="PROSITE" id="PS50089">
    <property type="entry name" value="ZF_RING_2"/>
    <property type="match status" value="1"/>
</dbReference>
<reference key="1">
    <citation type="journal article" date="2001" name="Biochem. Biophys. Res. Commun.">
        <title>GOA, a novel gene encoding a ring finger B-box coiled-coil protein, is overexpressed in astrocytoma.</title>
        <authorList>
            <person name="Vandeputte D.A.A."/>
            <person name="Meije C.B."/>
            <person name="van Dartel M."/>
            <person name="Leenstra S."/>
            <person name="Ijlst-Keizers H."/>
            <person name="Das P.K."/>
            <person name="Troost D."/>
            <person name="Bosch D.A."/>
            <person name="Baas F."/>
            <person name="Hulsebos T.J.M."/>
        </authorList>
    </citation>
    <scope>NUCLEOTIDE SEQUENCE [MRNA] (ISOFORM 1)</scope>
    <scope>SUBCELLULAR LOCATION</scope>
    <scope>TISSUE SPECIFICITY</scope>
    <scope>CHROMOSOMAL LOCATION</scope>
    <source>
        <tissue>Astrocytoma</tissue>
    </source>
</reference>
<reference key="2">
    <citation type="journal article" date="2006" name="Nature">
        <title>DNA sequence of human chromosome 17 and analysis of rearrangement in the human lineage.</title>
        <authorList>
            <person name="Zody M.C."/>
            <person name="Garber M."/>
            <person name="Adams D.J."/>
            <person name="Sharpe T."/>
            <person name="Harrow J."/>
            <person name="Lupski J.R."/>
            <person name="Nicholson C."/>
            <person name="Searle S.M."/>
            <person name="Wilming L."/>
            <person name="Young S.K."/>
            <person name="Abouelleil A."/>
            <person name="Allen N.R."/>
            <person name="Bi W."/>
            <person name="Bloom T."/>
            <person name="Borowsky M.L."/>
            <person name="Bugalter B.E."/>
            <person name="Butler J."/>
            <person name="Chang J.L."/>
            <person name="Chen C.-K."/>
            <person name="Cook A."/>
            <person name="Corum B."/>
            <person name="Cuomo C.A."/>
            <person name="de Jong P.J."/>
            <person name="DeCaprio D."/>
            <person name="Dewar K."/>
            <person name="FitzGerald M."/>
            <person name="Gilbert J."/>
            <person name="Gibson R."/>
            <person name="Gnerre S."/>
            <person name="Goldstein S."/>
            <person name="Grafham D.V."/>
            <person name="Grocock R."/>
            <person name="Hafez N."/>
            <person name="Hagopian D.S."/>
            <person name="Hart E."/>
            <person name="Norman C.H."/>
            <person name="Humphray S."/>
            <person name="Jaffe D.B."/>
            <person name="Jones M."/>
            <person name="Kamal M."/>
            <person name="Khodiyar V.K."/>
            <person name="LaButti K."/>
            <person name="Laird G."/>
            <person name="Lehoczky J."/>
            <person name="Liu X."/>
            <person name="Lokyitsang T."/>
            <person name="Loveland J."/>
            <person name="Lui A."/>
            <person name="Macdonald P."/>
            <person name="Major J.E."/>
            <person name="Matthews L."/>
            <person name="Mauceli E."/>
            <person name="McCarroll S.A."/>
            <person name="Mihalev A.H."/>
            <person name="Mudge J."/>
            <person name="Nguyen C."/>
            <person name="Nicol R."/>
            <person name="O'Leary S.B."/>
            <person name="Osoegawa K."/>
            <person name="Schwartz D.C."/>
            <person name="Shaw-Smith C."/>
            <person name="Stankiewicz P."/>
            <person name="Steward C."/>
            <person name="Swarbreck D."/>
            <person name="Venkataraman V."/>
            <person name="Whittaker C.A."/>
            <person name="Yang X."/>
            <person name="Zimmer A.R."/>
            <person name="Bradley A."/>
            <person name="Hubbard T."/>
            <person name="Birren B.W."/>
            <person name="Rogers J."/>
            <person name="Lander E.S."/>
            <person name="Nusbaum C."/>
        </authorList>
    </citation>
    <scope>NUCLEOTIDE SEQUENCE [LARGE SCALE GENOMIC DNA]</scope>
</reference>
<reference key="3">
    <citation type="submission" date="2005-07" db="EMBL/GenBank/DDBJ databases">
        <authorList>
            <person name="Mural R.J."/>
            <person name="Istrail S."/>
            <person name="Sutton G."/>
            <person name="Florea L."/>
            <person name="Halpern A.L."/>
            <person name="Mobarry C.M."/>
            <person name="Lippert R."/>
            <person name="Walenz B."/>
            <person name="Shatkay H."/>
            <person name="Dew I."/>
            <person name="Miller J.R."/>
            <person name="Flanigan M.J."/>
            <person name="Edwards N.J."/>
            <person name="Bolanos R."/>
            <person name="Fasulo D."/>
            <person name="Halldorsson B.V."/>
            <person name="Hannenhalli S."/>
            <person name="Turner R."/>
            <person name="Yooseph S."/>
            <person name="Lu F."/>
            <person name="Nusskern D.R."/>
            <person name="Shue B.C."/>
            <person name="Zheng X.H."/>
            <person name="Zhong F."/>
            <person name="Delcher A.L."/>
            <person name="Huson D.H."/>
            <person name="Kravitz S.A."/>
            <person name="Mouchard L."/>
            <person name="Reinert K."/>
            <person name="Remington K.A."/>
            <person name="Clark A.G."/>
            <person name="Waterman M.S."/>
            <person name="Eichler E.E."/>
            <person name="Adams M.D."/>
            <person name="Hunkapiller M.W."/>
            <person name="Myers E.W."/>
            <person name="Venter J.C."/>
        </authorList>
    </citation>
    <scope>NUCLEOTIDE SEQUENCE [LARGE SCALE GENOMIC DNA]</scope>
</reference>
<reference key="4">
    <citation type="journal article" date="2004" name="Genome Res.">
        <title>The status, quality, and expansion of the NIH full-length cDNA project: the Mammalian Gene Collection (MGC).</title>
        <authorList>
            <consortium name="The MGC Project Team"/>
        </authorList>
    </citation>
    <scope>NUCLEOTIDE SEQUENCE [LARGE SCALE MRNA] (ISOFORM 2)</scope>
    <scope>NUCLEOTIDE SEQUENCE [LARGE SCALE MRNA] OF 236-638 (ISOFORM 1)</scope>
    <source>
        <tissue>Lung</tissue>
        <tissue>Pancreas</tissue>
    </source>
</reference>
<reference key="5">
    <citation type="journal article" date="2006" name="Cell">
        <title>Global, in vivo, and site-specific phosphorylation dynamics in signaling networks.</title>
        <authorList>
            <person name="Olsen J.V."/>
            <person name="Blagoev B."/>
            <person name="Gnad F."/>
            <person name="Macek B."/>
            <person name="Kumar C."/>
            <person name="Mortensen P."/>
            <person name="Mann M."/>
        </authorList>
    </citation>
    <scope>PHOSPHORYLATION [LARGE SCALE ANALYSIS] AT SER-588</scope>
    <scope>IDENTIFICATION BY MASS SPECTROMETRY [LARGE SCALE ANALYSIS]</scope>
    <source>
        <tissue>Cervix carcinoma</tissue>
    </source>
</reference>
<reference key="6">
    <citation type="journal article" date="2006" name="Nat. Biotechnol.">
        <title>A probability-based approach for high-throughput protein phosphorylation analysis and site localization.</title>
        <authorList>
            <person name="Beausoleil S.A."/>
            <person name="Villen J."/>
            <person name="Gerber S.A."/>
            <person name="Rush J."/>
            <person name="Gygi S.P."/>
        </authorList>
    </citation>
    <scope>PHOSPHORYLATION [LARGE SCALE ANALYSIS] AT SER-461</scope>
    <scope>IDENTIFICATION BY MASS SPECTROMETRY [LARGE SCALE ANALYSIS]</scope>
    <source>
        <tissue>Cervix carcinoma</tissue>
    </source>
</reference>
<reference key="7">
    <citation type="journal article" date="2011" name="BMC Syst. Biol.">
        <title>Initial characterization of the human central proteome.</title>
        <authorList>
            <person name="Burkard T.R."/>
            <person name="Planyavsky M."/>
            <person name="Kaupe I."/>
            <person name="Breitwieser F.P."/>
            <person name="Buerckstuemmer T."/>
            <person name="Bennett K.L."/>
            <person name="Superti-Furga G."/>
            <person name="Colinge J."/>
        </authorList>
    </citation>
    <scope>IDENTIFICATION BY MASS SPECTROMETRY [LARGE SCALE ANALYSIS]</scope>
</reference>
<reference key="8">
    <citation type="journal article" date="2012" name="Proc. Natl. Acad. Sci. U.S.A.">
        <title>N-terminal acetylome analyses and functional insights of the N-terminal acetyltransferase NatB.</title>
        <authorList>
            <person name="Van Damme P."/>
            <person name="Lasa M."/>
            <person name="Polevoda B."/>
            <person name="Gazquez C."/>
            <person name="Elosegui-Artola A."/>
            <person name="Kim D.S."/>
            <person name="De Juan-Pardo E."/>
            <person name="Demeyer K."/>
            <person name="Hole K."/>
            <person name="Larrea E."/>
            <person name="Timmerman E."/>
            <person name="Prieto J."/>
            <person name="Arnesen T."/>
            <person name="Sherman F."/>
            <person name="Gevaert K."/>
            <person name="Aldabe R."/>
        </authorList>
    </citation>
    <scope>ACETYLATION [LARGE SCALE ANALYSIS] AT MET-1 (ISOFORM 2)</scope>
    <scope>IDENTIFICATION BY MASS SPECTROMETRY [LARGE SCALE ANALYSIS]</scope>
</reference>
<reference key="9">
    <citation type="journal article" date="2013" name="J. Proteome Res.">
        <title>Toward a comprehensive characterization of a human cancer cell phosphoproteome.</title>
        <authorList>
            <person name="Zhou H."/>
            <person name="Di Palma S."/>
            <person name="Preisinger C."/>
            <person name="Peng M."/>
            <person name="Polat A.N."/>
            <person name="Heck A.J."/>
            <person name="Mohammed S."/>
        </authorList>
    </citation>
    <scope>PHOSPHORYLATION [LARGE SCALE ANALYSIS] AT SER-588</scope>
    <scope>IDENTIFICATION BY MASS SPECTROMETRY [LARGE SCALE ANALYSIS]</scope>
    <source>
        <tissue>Cervix carcinoma</tissue>
        <tissue>Erythroleukemia</tissue>
    </source>
</reference>
<reference key="10">
    <citation type="journal article" date="2014" name="J. Proteomics">
        <title>An enzyme assisted RP-RPLC approach for in-depth analysis of human liver phosphoproteome.</title>
        <authorList>
            <person name="Bian Y."/>
            <person name="Song C."/>
            <person name="Cheng K."/>
            <person name="Dong M."/>
            <person name="Wang F."/>
            <person name="Huang J."/>
            <person name="Sun D."/>
            <person name="Wang L."/>
            <person name="Ye M."/>
            <person name="Zou H."/>
        </authorList>
    </citation>
    <scope>PHOSPHORYLATION [LARGE SCALE ANALYSIS] AT SER-588</scope>
    <scope>IDENTIFICATION BY MASS SPECTROMETRY [LARGE SCALE ANALYSIS]</scope>
    <source>
        <tissue>Liver</tissue>
    </source>
</reference>
<reference key="11">
    <citation type="journal article" date="2014" name="Mol. Cell. Proteomics">
        <title>Immunoaffinity enrichment and mass spectrometry analysis of protein methylation.</title>
        <authorList>
            <person name="Guo A."/>
            <person name="Gu H."/>
            <person name="Zhou J."/>
            <person name="Mulhern D."/>
            <person name="Wang Y."/>
            <person name="Lee K.A."/>
            <person name="Yang V."/>
            <person name="Aguiar M."/>
            <person name="Kornhauser J."/>
            <person name="Jia X."/>
            <person name="Ren J."/>
            <person name="Beausoleil S.A."/>
            <person name="Silva J.C."/>
            <person name="Vemulapalli V."/>
            <person name="Bedford M.T."/>
            <person name="Comb M.J."/>
        </authorList>
    </citation>
    <scope>METHYLATION [LARGE SCALE ANALYSIS] AT ARG-582</scope>
    <scope>IDENTIFICATION BY MASS SPECTROMETRY [LARGE SCALE ANALYSIS]</scope>
    <source>
        <tissue>Colon carcinoma</tissue>
    </source>
</reference>
<reference key="12">
    <citation type="journal article" date="2018" name="Nat. Med.">
        <title>The deubiquitinating enzyme cylindromatosis mitigates nonalcoholic steatohepatitis.</title>
        <authorList>
            <person name="Ji Y.X."/>
            <person name="Huang Z."/>
            <person name="Yang X."/>
            <person name="Wang X."/>
            <person name="Zhao L.P."/>
            <person name="Wang P.X."/>
            <person name="Zhang X.J."/>
            <person name="Alves-Bezerra M."/>
            <person name="Cai L."/>
            <person name="Zhang P."/>
            <person name="Lu Y.X."/>
            <person name="Bai L."/>
            <person name="Gao M.M."/>
            <person name="Zhao H."/>
            <person name="Tian S."/>
            <person name="Wang Y."/>
            <person name="Huang Z.X."/>
            <person name="Zhu X.Y."/>
            <person name="Zhang Y."/>
            <person name="Gong J."/>
            <person name="She Z.G."/>
            <person name="Li F."/>
            <person name="Cohen D.E."/>
            <person name="Li H."/>
        </authorList>
    </citation>
    <scope>FUNCTION</scope>
    <scope>CATALYTIC ACTIVITY</scope>
</reference>
<gene>
    <name evidence="11" type="primary">TRIM47</name>
    <name type="synonym">GOA</name>
    <name type="synonym">RNF100</name>
</gene>
<accession>Q96LD4</accession>
<accession>Q96AD0</accession>
<accession>Q96GU5</accession>
<accession>Q9BRN7</accession>
<comment type="function">
    <text evidence="8">E3 ubiquitin-protein ligase that mediates the ubiquitination and proteasomal degradation of CYLD.</text>
</comment>
<comment type="catalytic activity">
    <reaction evidence="8">
        <text>S-ubiquitinyl-[E2 ubiquitin-conjugating enzyme]-L-cysteine + [acceptor protein]-L-lysine = [E2 ubiquitin-conjugating enzyme]-L-cysteine + N(6)-ubiquitinyl-[acceptor protein]-L-lysine.</text>
        <dbReference type="EC" id="2.3.2.27"/>
    </reaction>
</comment>
<comment type="pathway">
    <text evidence="8">Protein modification; protein ubiquitination.</text>
</comment>
<comment type="interaction">
    <interactant intactId="EBI-12371725">
        <id>Q96LD4-2</id>
    </interactant>
    <interactant intactId="EBI-718504">
        <id>Q13867</id>
        <label>BLMH</label>
    </interactant>
    <organismsDiffer>false</organismsDiffer>
    <experiments>3</experiments>
</comment>
<comment type="interaction">
    <interactant intactId="EBI-12371725">
        <id>Q96LD4-2</id>
    </interactant>
    <interactant intactId="EBI-995714">
        <id>Q9Y605</id>
        <label>MRFAP1</label>
    </interactant>
    <organismsDiffer>false</organismsDiffer>
    <experiments>3</experiments>
</comment>
<comment type="subcellular location">
    <subcellularLocation>
        <location evidence="7">Cytoplasm</location>
    </subcellularLocation>
    <subcellularLocation>
        <location evidence="7">Nucleus</location>
    </subcellularLocation>
</comment>
<comment type="alternative products">
    <event type="alternative splicing"/>
    <isoform>
        <id>Q96LD4-1</id>
        <name>1</name>
        <sequence type="displayed"/>
    </isoform>
    <isoform>
        <id>Q96LD4-2</id>
        <name>2</name>
        <sequence type="described" ref="VSP_055440"/>
    </isoform>
</comment>
<comment type="tissue specificity">
    <text evidence="7">Low expression in most tissues. Higher expression in kidney tubular cells. Overexpressed in astrocytoma tumor cells.</text>
</comment>
<comment type="similarity">
    <text evidence="10">Belongs to the TRIM/RBCC family.</text>
</comment>
<name>TRI47_HUMAN</name>
<keyword id="KW-0007">Acetylation</keyword>
<keyword id="KW-0025">Alternative splicing</keyword>
<keyword id="KW-0175">Coiled coil</keyword>
<keyword id="KW-0963">Cytoplasm</keyword>
<keyword id="KW-0479">Metal-binding</keyword>
<keyword id="KW-0488">Methylation</keyword>
<keyword id="KW-0539">Nucleus</keyword>
<keyword id="KW-0597">Phosphoprotein</keyword>
<keyword id="KW-1267">Proteomics identification</keyword>
<keyword id="KW-1185">Reference proteome</keyword>
<keyword id="KW-0808">Transferase</keyword>
<keyword id="KW-0833">Ubl conjugation pathway</keyword>
<keyword id="KW-0862">Zinc</keyword>
<keyword id="KW-0863">Zinc-finger</keyword>
<sequence>MDGSGPFSCPICLEPLREPVTLPCGHNFCLACLGALWPHRGASGAGGPGGAARCPLCQEPFPDGLQLRKNHTLSELLQLRQGSGPGSGPGPAPALAPEPSAPSALPSVPEPSAPCAPEPWPAGEEPVRCDACPEGAALPAALSCLSCLASFCPAHLGPHERSPALRGHRLVPPLRRLEESLCPRHLRPLERYCRAERVCLCEACAAQEHRGHELVPLEQERALQEAEQSKVLSAVEDRMDELGAGIAQSRRTVALIKSAAVAERERVSRLFADAAAALQGFQTQVLGFIEEGEAAMLGRSQGDLRRQEEQRSRLSRARQNLSQVPEADSVSFLQELLALRLALEDGCGPGPGPPRELSFTKSSQAVRAVRDMLAVACVNQWEQLRGPGGNEDGPQKLDSEADAEPQDLESTNLLESEAPRDYFLKFAYIVDLDSDTADKFLQLFGTKGVKRVLCPINYPLSPTRFTHCEQVLGEGALDRGTYYWEVEIIEGWVSMGVMAEDFSPQEPYDRGRLGRNAHSCCLQWNGRSFSVWFHGLEAPLPHPFSPTVGVCLEYADRALAFYAVRDGKMSLLRRLKASRPRRGGIPASPIDPFQSRLDSHFAGLFTHRLKPAFFLESVDAHLQIGPLKKSCISVLKRR</sequence>
<organism>
    <name type="scientific">Homo sapiens</name>
    <name type="common">Human</name>
    <dbReference type="NCBI Taxonomy" id="9606"/>
    <lineage>
        <taxon>Eukaryota</taxon>
        <taxon>Metazoa</taxon>
        <taxon>Chordata</taxon>
        <taxon>Craniata</taxon>
        <taxon>Vertebrata</taxon>
        <taxon>Euteleostomi</taxon>
        <taxon>Mammalia</taxon>
        <taxon>Eutheria</taxon>
        <taxon>Euarchontoglires</taxon>
        <taxon>Primates</taxon>
        <taxon>Haplorrhini</taxon>
        <taxon>Catarrhini</taxon>
        <taxon>Hominidae</taxon>
        <taxon>Homo</taxon>
    </lineage>
</organism>
<protein>
    <recommendedName>
        <fullName evidence="10">E3 ubiquitin-protein ligase TRIM47</fullName>
        <ecNumber evidence="8">2.3.2.27</ecNumber>
    </recommendedName>
    <alternativeName>
        <fullName>Gene overexpressed in astrocytoma protein</fullName>
    </alternativeName>
    <alternativeName>
        <fullName>RING finger protein 100</fullName>
    </alternativeName>
    <alternativeName>
        <fullName evidence="10">Tripartite motif-containing protein 47</fullName>
    </alternativeName>
</protein>
<proteinExistence type="evidence at protein level"/>